<feature type="transit peptide" description="Chloroplast" evidence="3">
    <location>
        <begin position="1"/>
        <end position="42"/>
    </location>
</feature>
<feature type="chain" id="PRO_0000282284" description="Peroxiredoxin-2E-2, chloroplastic">
    <location>
        <begin position="43"/>
        <end position="225"/>
    </location>
</feature>
<feature type="domain" description="Thioredoxin" evidence="4">
    <location>
        <begin position="63"/>
        <end position="225"/>
    </location>
</feature>
<feature type="active site" description="Cysteine sulfenic acid (-SOH) intermediate" evidence="1">
    <location>
        <position position="111"/>
    </location>
</feature>
<accession>Q7F8S5</accession>
<accession>B7E6P6</accession>
<comment type="function">
    <text evidence="1 2">Thiol-specific peroxidase that catalyzes the reduction of hydrogen peroxide and organic hydroperoxides to water and alcohols, respectively. Plays a role in cell protection against oxidative stress by detoxifying peroxides (By similarity). May be involved in chloroplast redox homeostasis (By similarity).</text>
</comment>
<comment type="catalytic activity">
    <reaction evidence="1">
        <text>[glutaredoxin]-dithiol + a hydroperoxide = [glutaredoxin]-disulfide + an alcohol + H2O</text>
        <dbReference type="Rhea" id="RHEA:62624"/>
        <dbReference type="Rhea" id="RHEA-COMP:10729"/>
        <dbReference type="Rhea" id="RHEA-COMP:10730"/>
        <dbReference type="ChEBI" id="CHEBI:15377"/>
        <dbReference type="ChEBI" id="CHEBI:29950"/>
        <dbReference type="ChEBI" id="CHEBI:30879"/>
        <dbReference type="ChEBI" id="CHEBI:35924"/>
        <dbReference type="ChEBI" id="CHEBI:50058"/>
        <dbReference type="EC" id="1.11.1.25"/>
    </reaction>
</comment>
<comment type="subunit">
    <text evidence="2">Monomer.</text>
</comment>
<comment type="subcellular location">
    <subcellularLocation>
        <location evidence="2">Plastid</location>
        <location evidence="2">Chloroplast stroma</location>
    </subcellularLocation>
</comment>
<comment type="miscellaneous">
    <text evidence="1">The active site is a conserved redox-active cysteine residue, the peroxidatic cysteine (C(P)), which makes the nucleophilic attack on the peroxide substrate. The peroxide oxidizes the C(P)-SH to cysteine sulfenic acid (C(P)-SOH), which then reacts with another cysteine residue, the resolving cysteine (C(R)), to form a disulfide bridge. The disulfide is subsequently reduced by an appropriate electron donor to complete the catalytic cycle. In this 1-Cys peroxiredoxin, no C(R) is present and C(P) instead forms a disulfide with a cysteine from another protein or with a small thiol molecule.</text>
</comment>
<comment type="similarity">
    <text evidence="5">Belongs to the peroxiredoxin family. Prx5 subfamily.</text>
</comment>
<reference key="1">
    <citation type="journal article" date="2005" name="Nature">
        <title>The map-based sequence of the rice genome.</title>
        <authorList>
            <consortium name="International rice genome sequencing project (IRGSP)"/>
        </authorList>
    </citation>
    <scope>NUCLEOTIDE SEQUENCE [LARGE SCALE GENOMIC DNA]</scope>
    <source>
        <strain>cv. Nipponbare</strain>
    </source>
</reference>
<reference key="2">
    <citation type="journal article" date="2008" name="Nucleic Acids Res.">
        <title>The rice annotation project database (RAP-DB): 2008 update.</title>
        <authorList>
            <consortium name="The rice annotation project (RAP)"/>
        </authorList>
    </citation>
    <scope>GENOME REANNOTATION</scope>
    <source>
        <strain>cv. Nipponbare</strain>
    </source>
</reference>
<reference key="3">
    <citation type="journal article" date="2013" name="Rice">
        <title>Improvement of the Oryza sativa Nipponbare reference genome using next generation sequence and optical map data.</title>
        <authorList>
            <person name="Kawahara Y."/>
            <person name="de la Bastide M."/>
            <person name="Hamilton J.P."/>
            <person name="Kanamori H."/>
            <person name="McCombie W.R."/>
            <person name="Ouyang S."/>
            <person name="Schwartz D.C."/>
            <person name="Tanaka T."/>
            <person name="Wu J."/>
            <person name="Zhou S."/>
            <person name="Childs K.L."/>
            <person name="Davidson R.M."/>
            <person name="Lin H."/>
            <person name="Quesada-Ocampo L."/>
            <person name="Vaillancourt B."/>
            <person name="Sakai H."/>
            <person name="Lee S.S."/>
            <person name="Kim J."/>
            <person name="Numa H."/>
            <person name="Itoh T."/>
            <person name="Buell C.R."/>
            <person name="Matsumoto T."/>
        </authorList>
    </citation>
    <scope>GENOME REANNOTATION</scope>
    <source>
        <strain>cv. Nipponbare</strain>
    </source>
</reference>
<reference key="4">
    <citation type="journal article" date="2003" name="Science">
        <title>Collection, mapping, and annotation of over 28,000 cDNA clones from japonica rice.</title>
        <authorList>
            <consortium name="The rice full-length cDNA consortium"/>
        </authorList>
    </citation>
    <scope>NUCLEOTIDE SEQUENCE [LARGE SCALE MRNA]</scope>
    <source>
        <strain>cv. Nipponbare</strain>
    </source>
</reference>
<reference key="5">
    <citation type="journal article" date="2006" name="Proteomics">
        <title>Proteomic analysis of rice leaf, stem and root tissues during growth course.</title>
        <authorList>
            <person name="Nozu Y."/>
            <person name="Tsugita A."/>
            <person name="Kamijo K."/>
        </authorList>
    </citation>
    <scope>PROTEIN SEQUENCE [LARGE SCALE ANALYSIS] OF 62-68</scope>
    <scope>IDENTIFICATION BY MASS SPECTROMETRY</scope>
    <source>
        <strain>cv. Nipponbare</strain>
    </source>
</reference>
<dbReference type="EC" id="1.11.1.25" evidence="1"/>
<dbReference type="EMBL" id="AP000366">
    <property type="protein sequence ID" value="BAD15391.1"/>
    <property type="molecule type" value="Genomic_DNA"/>
</dbReference>
<dbReference type="EMBL" id="AP005785">
    <property type="protein sequence ID" value="BAD34026.1"/>
    <property type="molecule type" value="Genomic_DNA"/>
</dbReference>
<dbReference type="EMBL" id="AP008208">
    <property type="protein sequence ID" value="BAF08079.1"/>
    <property type="molecule type" value="Genomic_DNA"/>
</dbReference>
<dbReference type="EMBL" id="AP014958">
    <property type="protein sequence ID" value="BAS77421.1"/>
    <property type="molecule type" value="Genomic_DNA"/>
</dbReference>
<dbReference type="EMBL" id="AK061629">
    <property type="protein sequence ID" value="BAG88043.1"/>
    <property type="molecule type" value="mRNA"/>
</dbReference>
<dbReference type="EMBL" id="AK065909">
    <property type="protein sequence ID" value="BAG89730.1"/>
    <property type="molecule type" value="mRNA"/>
</dbReference>
<dbReference type="RefSeq" id="XP_015623954.1">
    <property type="nucleotide sequence ID" value="XM_015768468.1"/>
</dbReference>
<dbReference type="SMR" id="Q7F8S5"/>
<dbReference type="FunCoup" id="Q7F8S5">
    <property type="interactions" value="1929"/>
</dbReference>
<dbReference type="STRING" id="39947.Q7F8S5"/>
<dbReference type="PeroxiBase" id="4019">
    <property type="entry name" value="OsPrxII0502"/>
</dbReference>
<dbReference type="PaxDb" id="39947-Q7F8S5"/>
<dbReference type="EnsemblPlants" id="Os02t0192700-02">
    <property type="protein sequence ID" value="Os02t0192700-02"/>
    <property type="gene ID" value="Os02g0192700"/>
</dbReference>
<dbReference type="Gramene" id="Os02t0192700-02">
    <property type="protein sequence ID" value="Os02t0192700-02"/>
    <property type="gene ID" value="Os02g0192700"/>
</dbReference>
<dbReference type="KEGG" id="dosa:Os02g0192700"/>
<dbReference type="eggNOG" id="KOG0541">
    <property type="taxonomic scope" value="Eukaryota"/>
</dbReference>
<dbReference type="HOGENOM" id="CLU_072440_0_0_1"/>
<dbReference type="InParanoid" id="Q7F8S5"/>
<dbReference type="OMA" id="TEWGKAH"/>
<dbReference type="OrthoDB" id="1882547at2759"/>
<dbReference type="Proteomes" id="UP000000763">
    <property type="component" value="Chromosome 2"/>
</dbReference>
<dbReference type="Proteomes" id="UP000059680">
    <property type="component" value="Chromosome 2"/>
</dbReference>
<dbReference type="GO" id="GO:0009570">
    <property type="term" value="C:chloroplast stroma"/>
    <property type="evidence" value="ECO:0007669"/>
    <property type="project" value="UniProtKB-SubCell"/>
</dbReference>
<dbReference type="GO" id="GO:0005737">
    <property type="term" value="C:cytoplasm"/>
    <property type="evidence" value="ECO:0000318"/>
    <property type="project" value="GO_Central"/>
</dbReference>
<dbReference type="GO" id="GO:0008379">
    <property type="term" value="F:thioredoxin peroxidase activity"/>
    <property type="evidence" value="ECO:0000318"/>
    <property type="project" value="GO_Central"/>
</dbReference>
<dbReference type="GO" id="GO:0045454">
    <property type="term" value="P:cell redox homeostasis"/>
    <property type="evidence" value="ECO:0000318"/>
    <property type="project" value="GO_Central"/>
</dbReference>
<dbReference type="GO" id="GO:0034599">
    <property type="term" value="P:cellular response to oxidative stress"/>
    <property type="evidence" value="ECO:0000318"/>
    <property type="project" value="GO_Central"/>
</dbReference>
<dbReference type="GO" id="GO:0042744">
    <property type="term" value="P:hydrogen peroxide catabolic process"/>
    <property type="evidence" value="ECO:0000318"/>
    <property type="project" value="GO_Central"/>
</dbReference>
<dbReference type="CDD" id="cd03013">
    <property type="entry name" value="PRX5_like"/>
    <property type="match status" value="1"/>
</dbReference>
<dbReference type="FunFam" id="3.40.30.10:FF:000020">
    <property type="entry name" value="Peroxiredoxin"/>
    <property type="match status" value="1"/>
</dbReference>
<dbReference type="Gene3D" id="3.40.30.10">
    <property type="entry name" value="Glutaredoxin"/>
    <property type="match status" value="1"/>
</dbReference>
<dbReference type="InterPro" id="IPR037944">
    <property type="entry name" value="PRX5-like"/>
</dbReference>
<dbReference type="InterPro" id="IPR013740">
    <property type="entry name" value="Redoxin"/>
</dbReference>
<dbReference type="InterPro" id="IPR036249">
    <property type="entry name" value="Thioredoxin-like_sf"/>
</dbReference>
<dbReference type="InterPro" id="IPR013766">
    <property type="entry name" value="Thioredoxin_domain"/>
</dbReference>
<dbReference type="PANTHER" id="PTHR10430">
    <property type="entry name" value="PEROXIREDOXIN"/>
    <property type="match status" value="1"/>
</dbReference>
<dbReference type="PANTHER" id="PTHR10430:SF16">
    <property type="entry name" value="PEROXIREDOXIN-5, MITOCHONDRIAL"/>
    <property type="match status" value="1"/>
</dbReference>
<dbReference type="Pfam" id="PF08534">
    <property type="entry name" value="Redoxin"/>
    <property type="match status" value="1"/>
</dbReference>
<dbReference type="SUPFAM" id="SSF52833">
    <property type="entry name" value="Thioredoxin-like"/>
    <property type="match status" value="1"/>
</dbReference>
<dbReference type="PROSITE" id="PS51352">
    <property type="entry name" value="THIOREDOXIN_2"/>
    <property type="match status" value="1"/>
</dbReference>
<gene>
    <name type="primary">PRXIIE-2</name>
    <name type="ordered locus">Os02g0192700</name>
    <name type="ordered locus">LOC_Os02g09940</name>
    <name type="ORF">P0437H03.112</name>
    <name type="ORF">P0453H10.33</name>
</gene>
<proteinExistence type="evidence at protein level"/>
<keyword id="KW-0049">Antioxidant</keyword>
<keyword id="KW-0150">Chloroplast</keyword>
<keyword id="KW-0903">Direct protein sequencing</keyword>
<keyword id="KW-0560">Oxidoreductase</keyword>
<keyword id="KW-0575">Peroxidase</keyword>
<keyword id="KW-0934">Plastid</keyword>
<keyword id="KW-0676">Redox-active center</keyword>
<keyword id="KW-1185">Reference proteome</keyword>
<keyword id="KW-0809">Transit peptide</keyword>
<sequence length="225" mass="23180">MAAPTAAALSTLSTASVTSGKRFITSSFSLSFSSRPLATGVRAAGARAARRSAASASTVVATIAVGDKLPDATLSYFDPADGELKTVTVAELTAGRKAVLFAVPGAFTPTCSQKHLPGFIEKAGELHAKGVDAIACVSVNDAFVMRAWKESLGLGDADVLLLSDGNLELTRALGVEMDLSDKPMGLGVRSRRYALLADDGVVKVLNLEEGGAFTTSSAEEMLKAL</sequence>
<evidence type="ECO:0000250" key="1">
    <source>
        <dbReference type="UniProtKB" id="A9PCL4"/>
    </source>
</evidence>
<evidence type="ECO:0000250" key="2">
    <source>
        <dbReference type="UniProtKB" id="Q949U7"/>
    </source>
</evidence>
<evidence type="ECO:0000255" key="3"/>
<evidence type="ECO:0000255" key="4">
    <source>
        <dbReference type="PROSITE-ProRule" id="PRU00691"/>
    </source>
</evidence>
<evidence type="ECO:0000305" key="5"/>
<organism>
    <name type="scientific">Oryza sativa subsp. japonica</name>
    <name type="common">Rice</name>
    <dbReference type="NCBI Taxonomy" id="39947"/>
    <lineage>
        <taxon>Eukaryota</taxon>
        <taxon>Viridiplantae</taxon>
        <taxon>Streptophyta</taxon>
        <taxon>Embryophyta</taxon>
        <taxon>Tracheophyta</taxon>
        <taxon>Spermatophyta</taxon>
        <taxon>Magnoliopsida</taxon>
        <taxon>Liliopsida</taxon>
        <taxon>Poales</taxon>
        <taxon>Poaceae</taxon>
        <taxon>BOP clade</taxon>
        <taxon>Oryzoideae</taxon>
        <taxon>Oryzeae</taxon>
        <taxon>Oryzinae</taxon>
        <taxon>Oryza</taxon>
        <taxon>Oryza sativa</taxon>
    </lineage>
</organism>
<name>PR2E2_ORYSJ</name>
<protein>
    <recommendedName>
        <fullName>Peroxiredoxin-2E-2, chloroplastic</fullName>
        <ecNumber evidence="1">1.11.1.25</ecNumber>
    </recommendedName>
    <alternativeName>
        <fullName evidence="5">Glutaredoxin-dependent peroxiredoxin</fullName>
    </alternativeName>
    <alternativeName>
        <fullName>Peroxiredoxin IIE-2</fullName>
    </alternativeName>
    <alternativeName>
        <fullName>Thioredoxin peroxidase 2E-2</fullName>
    </alternativeName>
</protein>